<proteinExistence type="inferred from homology"/>
<name>PORTL_BPML5</name>
<accession>Q05220</accession>
<sequence length="486" mass="53758">MTAPLPGMEEIEDPAVVREEMISAFEDASKDLASNTSYYDAERRPEAIGVTVPREMQQLLAHVGYPRLYVDSVAERQAVEGFRLGDADEADEELWQWWQANNLDIEAPLGYTDAYVHGRSFITISKPDPQLDLGWDQNVPIIRVEPPTRMHAEIDPRINRVSKAIRVAYDKEGNEIQAATLYTPMETIGWFRADGEWAEWFNVPHGLGVVPVVPLPNRTRLSDLYGTSEITPELRSMTDAAARILMLMQATAELMGVPQRLIFGIKPEEIGVDSETGQTLFDAYLARILAFEDAEGKIQQFSAAELANFTNALDQIAKQVAAYTGLPPQYLSTAADNPASAEAIRAAESRLIKKVERKNLMFGGAWEEAMRIAYRIMKGGDVPPDMLRMETVWRDPSTPTYAAKADAATKLYGNGQGVIPRERARIDMGYSVKEREEMRRWDEEEAAMGLGLLGTMVDADPTVPGSPSPTAPPKPQPAIESSGGDA</sequence>
<evidence type="ECO:0000250" key="1">
    <source>
        <dbReference type="UniProtKB" id="P03710"/>
    </source>
</evidence>
<evidence type="ECO:0000250" key="2">
    <source>
        <dbReference type="UniProtKB" id="P54309"/>
    </source>
</evidence>
<evidence type="ECO:0000256" key="3">
    <source>
        <dbReference type="SAM" id="MobiDB-lite"/>
    </source>
</evidence>
<evidence type="ECO:0000305" key="4"/>
<dbReference type="EMBL" id="Z18946">
    <property type="protein sequence ID" value="CAA79390.1"/>
    <property type="molecule type" value="Genomic_DNA"/>
</dbReference>
<dbReference type="PIR" id="S30959">
    <property type="entry name" value="S30959"/>
</dbReference>
<dbReference type="RefSeq" id="NP_039678.1">
    <property type="nucleotide sequence ID" value="NC_001335.1"/>
</dbReference>
<dbReference type="SMR" id="Q05220"/>
<dbReference type="TCDB" id="1.W.7.3.7">
    <property type="family name" value="the (bacillus phage spp1) portal protein 7 (ppp7) family"/>
</dbReference>
<dbReference type="GeneID" id="2942930"/>
<dbReference type="KEGG" id="vg:2942930"/>
<dbReference type="OrthoDB" id="3592at10239"/>
<dbReference type="Proteomes" id="UP000002123">
    <property type="component" value="Genome"/>
</dbReference>
<dbReference type="GO" id="GO:0019028">
    <property type="term" value="C:viral capsid"/>
    <property type="evidence" value="ECO:0007669"/>
    <property type="project" value="UniProtKB-KW"/>
</dbReference>
<dbReference type="GO" id="GO:0099001">
    <property type="term" value="P:symbiont genome ejection through host cell envelope, long flexible tail mechanism"/>
    <property type="evidence" value="ECO:0007669"/>
    <property type="project" value="UniProtKB-KW"/>
</dbReference>
<dbReference type="InterPro" id="IPR021145">
    <property type="entry name" value="Portal_protein_SPP1_Gp6-like"/>
</dbReference>
<dbReference type="Pfam" id="PF05133">
    <property type="entry name" value="SPP1_portal"/>
    <property type="match status" value="1"/>
</dbReference>
<reference key="1">
    <citation type="journal article" date="1993" name="Mol. Microbiol.">
        <title>DNA sequence, structure and gene expression of mycobacteriophage L5: a phage system for mycobacterial genetics.</title>
        <authorList>
            <person name="Hatfull G.F."/>
            <person name="Sarkis G.J."/>
        </authorList>
    </citation>
    <scope>NUCLEOTIDE SEQUENCE [LARGE SCALE GENOMIC DNA]</scope>
</reference>
<protein>
    <recommendedName>
        <fullName evidence="4">Portal protein</fullName>
    </recommendedName>
    <alternativeName>
        <fullName>Gene product 14</fullName>
        <shortName>gp14</shortName>
    </alternativeName>
    <alternativeName>
        <fullName evidence="4">Portal vertex protein</fullName>
    </alternativeName>
</protein>
<keyword id="KW-0167">Capsid protein</keyword>
<keyword id="KW-1185">Reference proteome</keyword>
<keyword id="KW-0118">Viral capsid assembly</keyword>
<keyword id="KW-1171">Viral genome ejection through host cell envelope</keyword>
<keyword id="KW-0231">Viral genome packaging</keyword>
<keyword id="KW-1243">Viral long flexible tail ejection system</keyword>
<keyword id="KW-1162">Viral penetration into host cytoplasm</keyword>
<keyword id="KW-1188">Viral release from host cell</keyword>
<keyword id="KW-0946">Virion</keyword>
<keyword id="KW-1160">Virus entry into host cell</keyword>
<comment type="function">
    <text evidence="2">Forms the portal vertex of the capsid. This portal plays critical roles in head assembly, genome packaging, neck/tail attachment, and genome ejection. The portal protein multimerizes as a single ring-shaped homododecamer arranged around a central channel. Binds to the terminase subunits to form the packaging machine.</text>
</comment>
<comment type="subunit">
    <text evidence="2">Homododecamer.</text>
</comment>
<comment type="subcellular location">
    <subcellularLocation>
        <location evidence="1">Virion</location>
    </subcellularLocation>
</comment>
<comment type="similarity">
    <text evidence="4">Belongs to the SPP1-like portal protein family.</text>
</comment>
<organism>
    <name type="scientific">Mycobacterium phage L5</name>
    <name type="common">Mycobacteriophage L5</name>
    <dbReference type="NCBI Taxonomy" id="31757"/>
    <lineage>
        <taxon>Viruses</taxon>
        <taxon>Duplodnaviria</taxon>
        <taxon>Heunggongvirae</taxon>
        <taxon>Uroviricota</taxon>
        <taxon>Caudoviricetes</taxon>
        <taxon>Fromanvirus</taxon>
    </lineage>
</organism>
<gene>
    <name type="primary">14</name>
</gene>
<organismHost>
    <name type="scientific">Mycobacterium</name>
    <dbReference type="NCBI Taxonomy" id="1763"/>
</organismHost>
<feature type="chain" id="PRO_0000164717" description="Portal protein">
    <location>
        <begin position="1"/>
        <end position="486"/>
    </location>
</feature>
<feature type="region of interest" description="Disordered" evidence="3">
    <location>
        <begin position="456"/>
        <end position="486"/>
    </location>
</feature>
<feature type="compositionally biased region" description="Pro residues" evidence="3">
    <location>
        <begin position="464"/>
        <end position="476"/>
    </location>
</feature>